<feature type="chain" id="PRO_0000212133" description="2,3-bisphosphoglycerate-independent phosphoglycerate mutase">
    <location>
        <begin position="1"/>
        <end position="492"/>
    </location>
</feature>
<feature type="active site" description="Phosphoserine intermediate" evidence="1">
    <location>
        <position position="61"/>
    </location>
</feature>
<feature type="binding site" evidence="1">
    <location>
        <position position="11"/>
    </location>
    <ligand>
        <name>Mn(2+)</name>
        <dbReference type="ChEBI" id="CHEBI:29035"/>
        <label>2</label>
    </ligand>
</feature>
<feature type="binding site" evidence="1">
    <location>
        <position position="61"/>
    </location>
    <ligand>
        <name>Mn(2+)</name>
        <dbReference type="ChEBI" id="CHEBI:29035"/>
        <label>2</label>
    </ligand>
</feature>
<feature type="binding site" evidence="1">
    <location>
        <position position="118"/>
    </location>
    <ligand>
        <name>substrate</name>
    </ligand>
</feature>
<feature type="binding site" evidence="1">
    <location>
        <begin position="147"/>
        <end position="148"/>
    </location>
    <ligand>
        <name>substrate</name>
    </ligand>
</feature>
<feature type="binding site" evidence="1">
    <location>
        <position position="178"/>
    </location>
    <ligand>
        <name>substrate</name>
    </ligand>
</feature>
<feature type="binding site" evidence="1">
    <location>
        <position position="184"/>
    </location>
    <ligand>
        <name>substrate</name>
    </ligand>
</feature>
<feature type="binding site" evidence="1">
    <location>
        <begin position="248"/>
        <end position="251"/>
    </location>
    <ligand>
        <name>substrate</name>
    </ligand>
</feature>
<feature type="binding site" evidence="1">
    <location>
        <position position="320"/>
    </location>
    <ligand>
        <name>substrate</name>
    </ligand>
</feature>
<feature type="binding site" evidence="1">
    <location>
        <position position="386"/>
    </location>
    <ligand>
        <name>Mn(2+)</name>
        <dbReference type="ChEBI" id="CHEBI:29035"/>
        <label>1</label>
    </ligand>
</feature>
<feature type="binding site" evidence="1">
    <location>
        <position position="390"/>
    </location>
    <ligand>
        <name>Mn(2+)</name>
        <dbReference type="ChEBI" id="CHEBI:29035"/>
        <label>1</label>
    </ligand>
</feature>
<feature type="binding site" evidence="1">
    <location>
        <position position="427"/>
    </location>
    <ligand>
        <name>Mn(2+)</name>
        <dbReference type="ChEBI" id="CHEBI:29035"/>
        <label>2</label>
    </ligand>
</feature>
<feature type="binding site" evidence="1">
    <location>
        <position position="428"/>
    </location>
    <ligand>
        <name>Mn(2+)</name>
        <dbReference type="ChEBI" id="CHEBI:29035"/>
        <label>2</label>
    </ligand>
</feature>
<feature type="binding site" evidence="1">
    <location>
        <position position="445"/>
    </location>
    <ligand>
        <name>Mn(2+)</name>
        <dbReference type="ChEBI" id="CHEBI:29035"/>
        <label>1</label>
    </ligand>
</feature>
<name>GPMI_CAMJE</name>
<proteinExistence type="inferred from homology"/>
<accession>Q9PI71</accession>
<accession>Q0PB76</accession>
<protein>
    <recommendedName>
        <fullName evidence="1">2,3-bisphosphoglycerate-independent phosphoglycerate mutase</fullName>
        <shortName evidence="1">BPG-independent PGAM</shortName>
        <shortName evidence="1">Phosphoglyceromutase</shortName>
        <shortName evidence="1">iPGM</shortName>
        <ecNumber evidence="1">5.4.2.12</ecNumber>
    </recommendedName>
</protein>
<gene>
    <name evidence="1" type="primary">gpmI</name>
    <name type="synonym">pgm</name>
    <name type="ordered locus">Cj0434</name>
</gene>
<evidence type="ECO:0000255" key="1">
    <source>
        <dbReference type="HAMAP-Rule" id="MF_01038"/>
    </source>
</evidence>
<comment type="function">
    <text evidence="1">Catalyzes the interconversion of 2-phosphoglycerate and 3-phosphoglycerate.</text>
</comment>
<comment type="catalytic activity">
    <reaction evidence="1">
        <text>(2R)-2-phosphoglycerate = (2R)-3-phosphoglycerate</text>
        <dbReference type="Rhea" id="RHEA:15901"/>
        <dbReference type="ChEBI" id="CHEBI:58272"/>
        <dbReference type="ChEBI" id="CHEBI:58289"/>
        <dbReference type="EC" id="5.4.2.12"/>
    </reaction>
</comment>
<comment type="cofactor">
    <cofactor evidence="1">
        <name>Mn(2+)</name>
        <dbReference type="ChEBI" id="CHEBI:29035"/>
    </cofactor>
    <text evidence="1">Binds 2 manganese ions per subunit.</text>
</comment>
<comment type="pathway">
    <text evidence="1">Carbohydrate degradation; glycolysis; pyruvate from D-glyceraldehyde 3-phosphate: step 3/5.</text>
</comment>
<comment type="subunit">
    <text evidence="1">Monomer.</text>
</comment>
<comment type="similarity">
    <text evidence="1">Belongs to the BPG-independent phosphoglycerate mutase family.</text>
</comment>
<keyword id="KW-0324">Glycolysis</keyword>
<keyword id="KW-0413">Isomerase</keyword>
<keyword id="KW-0464">Manganese</keyword>
<keyword id="KW-0479">Metal-binding</keyword>
<keyword id="KW-1185">Reference proteome</keyword>
<dbReference type="EC" id="5.4.2.12" evidence="1"/>
<dbReference type="EMBL" id="AL111168">
    <property type="protein sequence ID" value="CAL34584.1"/>
    <property type="molecule type" value="Genomic_DNA"/>
</dbReference>
<dbReference type="PIR" id="H81387">
    <property type="entry name" value="H81387"/>
</dbReference>
<dbReference type="RefSeq" id="WP_002858599.1">
    <property type="nucleotide sequence ID" value="NZ_SZUC01000002.1"/>
</dbReference>
<dbReference type="RefSeq" id="YP_002343871.1">
    <property type="nucleotide sequence ID" value="NC_002163.1"/>
</dbReference>
<dbReference type="SMR" id="Q9PI71"/>
<dbReference type="IntAct" id="Q9PI71">
    <property type="interactions" value="35"/>
</dbReference>
<dbReference type="STRING" id="192222.Cj0434"/>
<dbReference type="PaxDb" id="192222-Cj0434"/>
<dbReference type="EnsemblBacteria" id="CAL34584">
    <property type="protein sequence ID" value="CAL34584"/>
    <property type="gene ID" value="Cj0434"/>
</dbReference>
<dbReference type="GeneID" id="904759"/>
<dbReference type="KEGG" id="cje:Cj0434"/>
<dbReference type="PATRIC" id="fig|192222.6.peg.424"/>
<dbReference type="eggNOG" id="COG0696">
    <property type="taxonomic scope" value="Bacteria"/>
</dbReference>
<dbReference type="HOGENOM" id="CLU_026099_2_0_7"/>
<dbReference type="OrthoDB" id="9800863at2"/>
<dbReference type="UniPathway" id="UPA00109">
    <property type="reaction ID" value="UER00186"/>
</dbReference>
<dbReference type="Proteomes" id="UP000000799">
    <property type="component" value="Chromosome"/>
</dbReference>
<dbReference type="GO" id="GO:0005829">
    <property type="term" value="C:cytosol"/>
    <property type="evidence" value="ECO:0007669"/>
    <property type="project" value="TreeGrafter"/>
</dbReference>
<dbReference type="GO" id="GO:0030145">
    <property type="term" value="F:manganese ion binding"/>
    <property type="evidence" value="ECO:0007669"/>
    <property type="project" value="UniProtKB-UniRule"/>
</dbReference>
<dbReference type="GO" id="GO:0004619">
    <property type="term" value="F:phosphoglycerate mutase activity"/>
    <property type="evidence" value="ECO:0007669"/>
    <property type="project" value="UniProtKB-EC"/>
</dbReference>
<dbReference type="GO" id="GO:0006007">
    <property type="term" value="P:glucose catabolic process"/>
    <property type="evidence" value="ECO:0007669"/>
    <property type="project" value="InterPro"/>
</dbReference>
<dbReference type="GO" id="GO:0006096">
    <property type="term" value="P:glycolytic process"/>
    <property type="evidence" value="ECO:0007669"/>
    <property type="project" value="UniProtKB-UniRule"/>
</dbReference>
<dbReference type="CDD" id="cd16010">
    <property type="entry name" value="iPGM"/>
    <property type="match status" value="1"/>
</dbReference>
<dbReference type="FunFam" id="3.40.1450.10:FF:000002">
    <property type="entry name" value="2,3-bisphosphoglycerate-independent phosphoglycerate mutase"/>
    <property type="match status" value="1"/>
</dbReference>
<dbReference type="Gene3D" id="3.40.720.10">
    <property type="entry name" value="Alkaline Phosphatase, subunit A"/>
    <property type="match status" value="1"/>
</dbReference>
<dbReference type="Gene3D" id="3.40.1450.10">
    <property type="entry name" value="BPG-independent phosphoglycerate mutase, domain B"/>
    <property type="match status" value="1"/>
</dbReference>
<dbReference type="HAMAP" id="MF_01038">
    <property type="entry name" value="GpmI"/>
    <property type="match status" value="1"/>
</dbReference>
<dbReference type="InterPro" id="IPR017850">
    <property type="entry name" value="Alkaline_phosphatase_core_sf"/>
</dbReference>
<dbReference type="InterPro" id="IPR011258">
    <property type="entry name" value="BPG-indep_PGM_N"/>
</dbReference>
<dbReference type="InterPro" id="IPR006124">
    <property type="entry name" value="Metalloenzyme"/>
</dbReference>
<dbReference type="InterPro" id="IPR036646">
    <property type="entry name" value="PGAM_B_sf"/>
</dbReference>
<dbReference type="InterPro" id="IPR005995">
    <property type="entry name" value="Pgm_bpd_ind"/>
</dbReference>
<dbReference type="NCBIfam" id="TIGR01307">
    <property type="entry name" value="pgm_bpd_ind"/>
    <property type="match status" value="1"/>
</dbReference>
<dbReference type="PANTHER" id="PTHR31637">
    <property type="entry name" value="2,3-BISPHOSPHOGLYCERATE-INDEPENDENT PHOSPHOGLYCERATE MUTASE"/>
    <property type="match status" value="1"/>
</dbReference>
<dbReference type="PANTHER" id="PTHR31637:SF0">
    <property type="entry name" value="2,3-BISPHOSPHOGLYCERATE-INDEPENDENT PHOSPHOGLYCERATE MUTASE"/>
    <property type="match status" value="1"/>
</dbReference>
<dbReference type="Pfam" id="PF06415">
    <property type="entry name" value="iPGM_N"/>
    <property type="match status" value="1"/>
</dbReference>
<dbReference type="Pfam" id="PF01676">
    <property type="entry name" value="Metalloenzyme"/>
    <property type="match status" value="1"/>
</dbReference>
<dbReference type="PIRSF" id="PIRSF001492">
    <property type="entry name" value="IPGAM"/>
    <property type="match status" value="1"/>
</dbReference>
<dbReference type="SUPFAM" id="SSF64158">
    <property type="entry name" value="2,3-Bisphosphoglycerate-independent phosphoglycerate mutase, substrate-binding domain"/>
    <property type="match status" value="1"/>
</dbReference>
<dbReference type="SUPFAM" id="SSF53649">
    <property type="entry name" value="Alkaline phosphatase-like"/>
    <property type="match status" value="1"/>
</dbReference>
<sequence>MKQKCVLIITDGIGYNKNSKFNAFEAAKKPSYEKLFKEVPNSLLKTSGLAVGLPEGQMGNSEVGHMCIGSGRIIYQNLVRINKAIENKELEKNENLKKLLAKCKRVHIIGLYSDGGVHSMDTHFKAMLEICAKNGNEVFAHAITDGRDVSPKSGLNFIKDLKEFCENLGVHFATLCGRFYAMDRDKRWDRVKEYYECLLGKAYKVPNLLEYLQKSYDENVTDEFIKAAQNENYKGMREEDGIIFINFRNDRMKQLVEVLNSKDFKEFEREKIFENLLTMSVYDDKFKLPVLFEKEKIENTLAQVISKAGLSQLHTAETEKYAHVTFFFNGGKEELLENETRVLIPSPKVKTYDEKPQMSAFEVCDAVKKGIEKGEDFIVVNFANGDMVGHTGDFNATIKAVEAVDTCLGEILECAKKHDYAFIITSDHGNCEAMQDEKGNLLTNHTTFDVFVFVQARGVSKIKDNMGLSNIAASVLKILDLEIPKEMNEALF</sequence>
<organism>
    <name type="scientific">Campylobacter jejuni subsp. jejuni serotype O:2 (strain ATCC 700819 / NCTC 11168)</name>
    <dbReference type="NCBI Taxonomy" id="192222"/>
    <lineage>
        <taxon>Bacteria</taxon>
        <taxon>Pseudomonadati</taxon>
        <taxon>Campylobacterota</taxon>
        <taxon>Epsilonproteobacteria</taxon>
        <taxon>Campylobacterales</taxon>
        <taxon>Campylobacteraceae</taxon>
        <taxon>Campylobacter</taxon>
    </lineage>
</organism>
<reference key="1">
    <citation type="journal article" date="2000" name="Nature">
        <title>The genome sequence of the food-borne pathogen Campylobacter jejuni reveals hypervariable sequences.</title>
        <authorList>
            <person name="Parkhill J."/>
            <person name="Wren B.W."/>
            <person name="Mungall K.L."/>
            <person name="Ketley J.M."/>
            <person name="Churcher C.M."/>
            <person name="Basham D."/>
            <person name="Chillingworth T."/>
            <person name="Davies R.M."/>
            <person name="Feltwell T."/>
            <person name="Holroyd S."/>
            <person name="Jagels K."/>
            <person name="Karlyshev A.V."/>
            <person name="Moule S."/>
            <person name="Pallen M.J."/>
            <person name="Penn C.W."/>
            <person name="Quail M.A."/>
            <person name="Rajandream M.A."/>
            <person name="Rutherford K.M."/>
            <person name="van Vliet A.H.M."/>
            <person name="Whitehead S."/>
            <person name="Barrell B.G."/>
        </authorList>
    </citation>
    <scope>NUCLEOTIDE SEQUENCE [LARGE SCALE GENOMIC DNA]</scope>
    <source>
        <strain>ATCC 700819 / NCTC 11168</strain>
    </source>
</reference>